<name>HSLV_LISMO</name>
<protein>
    <recommendedName>
        <fullName evidence="1">ATP-dependent protease subunit HslV</fullName>
        <ecNumber evidence="1">3.4.25.2</ecNumber>
    </recommendedName>
</protein>
<feature type="chain" id="PRO_0000148122" description="ATP-dependent protease subunit HslV">
    <location>
        <begin position="1"/>
        <end position="179"/>
    </location>
</feature>
<feature type="active site" evidence="1">
    <location>
        <position position="6"/>
    </location>
</feature>
<feature type="binding site" evidence="1">
    <location>
        <position position="164"/>
    </location>
    <ligand>
        <name>Na(+)</name>
        <dbReference type="ChEBI" id="CHEBI:29101"/>
    </ligand>
</feature>
<feature type="binding site" evidence="1">
    <location>
        <position position="167"/>
    </location>
    <ligand>
        <name>Na(+)</name>
        <dbReference type="ChEBI" id="CHEBI:29101"/>
    </ligand>
</feature>
<feature type="binding site" evidence="1">
    <location>
        <position position="170"/>
    </location>
    <ligand>
        <name>Na(+)</name>
        <dbReference type="ChEBI" id="CHEBI:29101"/>
    </ligand>
</feature>
<gene>
    <name evidence="1" type="primary">hslV</name>
    <name type="synonym">clpQ</name>
    <name type="ordered locus">lmo1278</name>
</gene>
<comment type="function">
    <text evidence="1">Protease subunit of a proteasome-like degradation complex believed to be a general protein degrading machinery.</text>
</comment>
<comment type="catalytic activity">
    <reaction evidence="1">
        <text>ATP-dependent cleavage of peptide bonds with broad specificity.</text>
        <dbReference type="EC" id="3.4.25.2"/>
    </reaction>
</comment>
<comment type="activity regulation">
    <text evidence="1">Allosterically activated by HslU binding.</text>
</comment>
<comment type="subunit">
    <text evidence="1">A double ring-shaped homohexamer of HslV is capped on each side by a ring-shaped HslU homohexamer. The assembly of the HslU/HslV complex is dependent on binding of ATP.</text>
</comment>
<comment type="subcellular location">
    <subcellularLocation>
        <location evidence="1">Cytoplasm</location>
    </subcellularLocation>
</comment>
<comment type="similarity">
    <text evidence="1">Belongs to the peptidase T1B family. HslV subfamily.</text>
</comment>
<accession>Q8Y7J9</accession>
<keyword id="KW-0021">Allosteric enzyme</keyword>
<keyword id="KW-0963">Cytoplasm</keyword>
<keyword id="KW-0378">Hydrolase</keyword>
<keyword id="KW-0479">Metal-binding</keyword>
<keyword id="KW-0645">Protease</keyword>
<keyword id="KW-1185">Reference proteome</keyword>
<keyword id="KW-0915">Sodium</keyword>
<keyword id="KW-0888">Threonine protease</keyword>
<proteinExistence type="inferred from homology"/>
<evidence type="ECO:0000255" key="1">
    <source>
        <dbReference type="HAMAP-Rule" id="MF_00248"/>
    </source>
</evidence>
<dbReference type="EC" id="3.4.25.2" evidence="1"/>
<dbReference type="EMBL" id="AL591978">
    <property type="protein sequence ID" value="CAC99356.1"/>
    <property type="molecule type" value="Genomic_DNA"/>
</dbReference>
<dbReference type="PIR" id="AF1234">
    <property type="entry name" value="AF1234"/>
</dbReference>
<dbReference type="RefSeq" id="NP_464803.1">
    <property type="nucleotide sequence ID" value="NC_003210.1"/>
</dbReference>
<dbReference type="RefSeq" id="WP_003724001.1">
    <property type="nucleotide sequence ID" value="NZ_CP149495.1"/>
</dbReference>
<dbReference type="SMR" id="Q8Y7J9"/>
<dbReference type="STRING" id="169963.gene:17593935"/>
<dbReference type="MEROPS" id="T01.007"/>
<dbReference type="PaxDb" id="169963-lmo1278"/>
<dbReference type="EnsemblBacteria" id="CAC99356">
    <property type="protein sequence ID" value="CAC99356"/>
    <property type="gene ID" value="CAC99356"/>
</dbReference>
<dbReference type="GeneID" id="93239152"/>
<dbReference type="GeneID" id="985099"/>
<dbReference type="KEGG" id="lmo:lmo1278"/>
<dbReference type="PATRIC" id="fig|169963.11.peg.1313"/>
<dbReference type="eggNOG" id="COG5405">
    <property type="taxonomic scope" value="Bacteria"/>
</dbReference>
<dbReference type="HOGENOM" id="CLU_093872_1_1_9"/>
<dbReference type="OrthoDB" id="9804884at2"/>
<dbReference type="PhylomeDB" id="Q8Y7J9"/>
<dbReference type="BioCyc" id="LMON169963:LMO1278-MONOMER"/>
<dbReference type="Proteomes" id="UP000000817">
    <property type="component" value="Chromosome"/>
</dbReference>
<dbReference type="GO" id="GO:0005737">
    <property type="term" value="C:cytoplasm"/>
    <property type="evidence" value="ECO:0000318"/>
    <property type="project" value="GO_Central"/>
</dbReference>
<dbReference type="GO" id="GO:0009376">
    <property type="term" value="C:HslUV protease complex"/>
    <property type="evidence" value="ECO:0007669"/>
    <property type="project" value="UniProtKB-UniRule"/>
</dbReference>
<dbReference type="GO" id="GO:0005839">
    <property type="term" value="C:proteasome core complex"/>
    <property type="evidence" value="ECO:0007669"/>
    <property type="project" value="InterPro"/>
</dbReference>
<dbReference type="GO" id="GO:0046872">
    <property type="term" value="F:metal ion binding"/>
    <property type="evidence" value="ECO:0007669"/>
    <property type="project" value="UniProtKB-KW"/>
</dbReference>
<dbReference type="GO" id="GO:0004298">
    <property type="term" value="F:threonine-type endopeptidase activity"/>
    <property type="evidence" value="ECO:0007669"/>
    <property type="project" value="UniProtKB-KW"/>
</dbReference>
<dbReference type="GO" id="GO:0051603">
    <property type="term" value="P:proteolysis involved in protein catabolic process"/>
    <property type="evidence" value="ECO:0000318"/>
    <property type="project" value="GO_Central"/>
</dbReference>
<dbReference type="CDD" id="cd01913">
    <property type="entry name" value="protease_HslV"/>
    <property type="match status" value="1"/>
</dbReference>
<dbReference type="FunFam" id="3.60.20.10:FF:000002">
    <property type="entry name" value="ATP-dependent protease subunit HslV"/>
    <property type="match status" value="1"/>
</dbReference>
<dbReference type="Gene3D" id="3.60.20.10">
    <property type="entry name" value="Glutamine Phosphoribosylpyrophosphate, subunit 1, domain 1"/>
    <property type="match status" value="1"/>
</dbReference>
<dbReference type="HAMAP" id="MF_00248">
    <property type="entry name" value="HslV"/>
    <property type="match status" value="1"/>
</dbReference>
<dbReference type="InterPro" id="IPR022281">
    <property type="entry name" value="ATP-dep_Prtase_HsIV_su"/>
</dbReference>
<dbReference type="InterPro" id="IPR029055">
    <property type="entry name" value="Ntn_hydrolases_N"/>
</dbReference>
<dbReference type="InterPro" id="IPR001353">
    <property type="entry name" value="Proteasome_sua/b"/>
</dbReference>
<dbReference type="InterPro" id="IPR023333">
    <property type="entry name" value="Proteasome_suB-type"/>
</dbReference>
<dbReference type="NCBIfam" id="TIGR03692">
    <property type="entry name" value="ATP_dep_HslV"/>
    <property type="match status" value="1"/>
</dbReference>
<dbReference type="NCBIfam" id="NF003964">
    <property type="entry name" value="PRK05456.1"/>
    <property type="match status" value="1"/>
</dbReference>
<dbReference type="PANTHER" id="PTHR32194:SF0">
    <property type="entry name" value="ATP-DEPENDENT PROTEASE SUBUNIT HSLV"/>
    <property type="match status" value="1"/>
</dbReference>
<dbReference type="PANTHER" id="PTHR32194">
    <property type="entry name" value="METALLOPROTEASE TLDD"/>
    <property type="match status" value="1"/>
</dbReference>
<dbReference type="Pfam" id="PF00227">
    <property type="entry name" value="Proteasome"/>
    <property type="match status" value="1"/>
</dbReference>
<dbReference type="PIRSF" id="PIRSF039093">
    <property type="entry name" value="HslV"/>
    <property type="match status" value="1"/>
</dbReference>
<dbReference type="SUPFAM" id="SSF56235">
    <property type="entry name" value="N-terminal nucleophile aminohydrolases (Ntn hydrolases)"/>
    <property type="match status" value="1"/>
</dbReference>
<dbReference type="PROSITE" id="PS51476">
    <property type="entry name" value="PROTEASOME_BETA_2"/>
    <property type="match status" value="1"/>
</dbReference>
<sequence>MELHATTIFAVQHDGKAAMAGDGQVTLGESVVMKHTAKKVRRLFHDKVIAGFAGSVADAFTLFEKFEAKLNEYNGNLERASVELAQQWRSDSVLRKLEAMLIVMDKDTLLLVSGTGEVIEPDDGILAIGSGGNYALAAGRALKRHNGGQMEAKDIARHALEIASEICVFTNDHITVEEL</sequence>
<reference key="1">
    <citation type="journal article" date="2001" name="Science">
        <title>Comparative genomics of Listeria species.</title>
        <authorList>
            <person name="Glaser P."/>
            <person name="Frangeul L."/>
            <person name="Buchrieser C."/>
            <person name="Rusniok C."/>
            <person name="Amend A."/>
            <person name="Baquero F."/>
            <person name="Berche P."/>
            <person name="Bloecker H."/>
            <person name="Brandt P."/>
            <person name="Chakraborty T."/>
            <person name="Charbit A."/>
            <person name="Chetouani F."/>
            <person name="Couve E."/>
            <person name="de Daruvar A."/>
            <person name="Dehoux P."/>
            <person name="Domann E."/>
            <person name="Dominguez-Bernal G."/>
            <person name="Duchaud E."/>
            <person name="Durant L."/>
            <person name="Dussurget O."/>
            <person name="Entian K.-D."/>
            <person name="Fsihi H."/>
            <person name="Garcia-del Portillo F."/>
            <person name="Garrido P."/>
            <person name="Gautier L."/>
            <person name="Goebel W."/>
            <person name="Gomez-Lopez N."/>
            <person name="Hain T."/>
            <person name="Hauf J."/>
            <person name="Jackson D."/>
            <person name="Jones L.-M."/>
            <person name="Kaerst U."/>
            <person name="Kreft J."/>
            <person name="Kuhn M."/>
            <person name="Kunst F."/>
            <person name="Kurapkat G."/>
            <person name="Madueno E."/>
            <person name="Maitournam A."/>
            <person name="Mata Vicente J."/>
            <person name="Ng E."/>
            <person name="Nedjari H."/>
            <person name="Nordsiek G."/>
            <person name="Novella S."/>
            <person name="de Pablos B."/>
            <person name="Perez-Diaz J.-C."/>
            <person name="Purcell R."/>
            <person name="Remmel B."/>
            <person name="Rose M."/>
            <person name="Schlueter T."/>
            <person name="Simoes N."/>
            <person name="Tierrez A."/>
            <person name="Vazquez-Boland J.-A."/>
            <person name="Voss H."/>
            <person name="Wehland J."/>
            <person name="Cossart P."/>
        </authorList>
    </citation>
    <scope>NUCLEOTIDE SEQUENCE [LARGE SCALE GENOMIC DNA]</scope>
    <source>
        <strain>ATCC BAA-679 / EGD-e</strain>
    </source>
</reference>
<organism>
    <name type="scientific">Listeria monocytogenes serovar 1/2a (strain ATCC BAA-679 / EGD-e)</name>
    <dbReference type="NCBI Taxonomy" id="169963"/>
    <lineage>
        <taxon>Bacteria</taxon>
        <taxon>Bacillati</taxon>
        <taxon>Bacillota</taxon>
        <taxon>Bacilli</taxon>
        <taxon>Bacillales</taxon>
        <taxon>Listeriaceae</taxon>
        <taxon>Listeria</taxon>
    </lineage>
</organism>